<accession>B7LQI2</accession>
<sequence length="443" mass="49111">MSSTDNIVSGKAQHSYWRKSDTTWTLGLFGTAIGAGVLFFPIRAGFGGLIPILVMLVLAYPIAFYCHRALARLCLSGANPSGNITETVEEHFGKTGGVVITFLYFFAICPLLWIYGVTITNTFMTFWENQLHLPALNRGFVALFLLLLMAVIIWFGRDLMVKVMSFLVWPFIASLVLISLSLIPYWNSAVIDQVDLSALSLTGHDGILVTVWLGISIMVFSFNFSPIVSSFVVFKREEYEKKFGRDFTERKCSKIISRASILMVAVVMFFAFSCLFALSPQNMAEAKAQNIPVLSYLANHFSSMSGSQSSFALTLEYAASIIALVAIFKSFFGHYLGTLEGLNRLIIKFAYKGDKSKISMSKLNTLSMVFIMGSTWLVAYVNPNILDLIEAMGAPIIASLLCLLPMYAIHKVPSLAKYRGRIDNVFVTAIGLLTISNIVYKVF</sequence>
<name>TDCC_ESCF3</name>
<evidence type="ECO:0000255" key="1">
    <source>
        <dbReference type="HAMAP-Rule" id="MF_01583"/>
    </source>
</evidence>
<keyword id="KW-0029">Amino-acid transport</keyword>
<keyword id="KW-0997">Cell inner membrane</keyword>
<keyword id="KW-1003">Cell membrane</keyword>
<keyword id="KW-0472">Membrane</keyword>
<keyword id="KW-0769">Symport</keyword>
<keyword id="KW-0812">Transmembrane</keyword>
<keyword id="KW-1133">Transmembrane helix</keyword>
<keyword id="KW-0813">Transport</keyword>
<comment type="function">
    <text evidence="1">Involved in the import of threonine and serine into the cell, with the concomitant import of a proton (symport system).</text>
</comment>
<comment type="catalytic activity">
    <reaction evidence="1">
        <text>L-threonine(in) + H(+)(in) = L-threonine(out) + H(+)(out)</text>
        <dbReference type="Rhea" id="RHEA:28883"/>
        <dbReference type="ChEBI" id="CHEBI:15378"/>
        <dbReference type="ChEBI" id="CHEBI:57926"/>
    </reaction>
    <physiologicalReaction direction="right-to-left" evidence="1">
        <dbReference type="Rhea" id="RHEA:28885"/>
    </physiologicalReaction>
</comment>
<comment type="catalytic activity">
    <reaction evidence="1">
        <text>L-serine(in) + H(+)(in) = L-serine(out) + H(+)(out)</text>
        <dbReference type="Rhea" id="RHEA:28887"/>
        <dbReference type="ChEBI" id="CHEBI:15378"/>
        <dbReference type="ChEBI" id="CHEBI:33384"/>
    </reaction>
    <physiologicalReaction direction="right-to-left" evidence="1">
        <dbReference type="Rhea" id="RHEA:28889"/>
    </physiologicalReaction>
</comment>
<comment type="subcellular location">
    <subcellularLocation>
        <location evidence="1">Cell inner membrane</location>
        <topology evidence="1">Multi-pass membrane protein</topology>
    </subcellularLocation>
</comment>
<comment type="similarity">
    <text evidence="1">Belongs to the amino acid/polyamine transporter 2 family. SdaC/TdcC subfamily.</text>
</comment>
<reference key="1">
    <citation type="journal article" date="2009" name="PLoS Genet.">
        <title>Organised genome dynamics in the Escherichia coli species results in highly diverse adaptive paths.</title>
        <authorList>
            <person name="Touchon M."/>
            <person name="Hoede C."/>
            <person name="Tenaillon O."/>
            <person name="Barbe V."/>
            <person name="Baeriswyl S."/>
            <person name="Bidet P."/>
            <person name="Bingen E."/>
            <person name="Bonacorsi S."/>
            <person name="Bouchier C."/>
            <person name="Bouvet O."/>
            <person name="Calteau A."/>
            <person name="Chiapello H."/>
            <person name="Clermont O."/>
            <person name="Cruveiller S."/>
            <person name="Danchin A."/>
            <person name="Diard M."/>
            <person name="Dossat C."/>
            <person name="Karoui M.E."/>
            <person name="Frapy E."/>
            <person name="Garry L."/>
            <person name="Ghigo J.M."/>
            <person name="Gilles A.M."/>
            <person name="Johnson J."/>
            <person name="Le Bouguenec C."/>
            <person name="Lescat M."/>
            <person name="Mangenot S."/>
            <person name="Martinez-Jehanne V."/>
            <person name="Matic I."/>
            <person name="Nassif X."/>
            <person name="Oztas S."/>
            <person name="Petit M.A."/>
            <person name="Pichon C."/>
            <person name="Rouy Z."/>
            <person name="Ruf C.S."/>
            <person name="Schneider D."/>
            <person name="Tourret J."/>
            <person name="Vacherie B."/>
            <person name="Vallenet D."/>
            <person name="Medigue C."/>
            <person name="Rocha E.P.C."/>
            <person name="Denamur E."/>
        </authorList>
    </citation>
    <scope>NUCLEOTIDE SEQUENCE [LARGE SCALE GENOMIC DNA]</scope>
    <source>
        <strain>ATCC 35469 / DSM 13698 / BCRC 15582 / CCUG 18766 / IAM 14443 / JCM 21226 / LMG 7866 / NBRC 102419 / NCTC 12128 / CDC 0568-73</strain>
    </source>
</reference>
<proteinExistence type="inferred from homology"/>
<protein>
    <recommendedName>
        <fullName evidence="1">Threonine/serine transporter TdcC</fullName>
    </recommendedName>
    <alternativeName>
        <fullName evidence="1">H(+)/threonine-serine symporter</fullName>
    </alternativeName>
</protein>
<gene>
    <name evidence="1" type="primary">tdcC</name>
    <name type="ordered locus">EFER_3049</name>
</gene>
<organism>
    <name type="scientific">Escherichia fergusonii (strain ATCC 35469 / DSM 13698 / CCUG 18766 / IAM 14443 / JCM 21226 / LMG 7866 / NBRC 102419 / NCTC 12128 / CDC 0568-73)</name>
    <dbReference type="NCBI Taxonomy" id="585054"/>
    <lineage>
        <taxon>Bacteria</taxon>
        <taxon>Pseudomonadati</taxon>
        <taxon>Pseudomonadota</taxon>
        <taxon>Gammaproteobacteria</taxon>
        <taxon>Enterobacterales</taxon>
        <taxon>Enterobacteriaceae</taxon>
        <taxon>Escherichia</taxon>
    </lineage>
</organism>
<feature type="chain" id="PRO_1000147633" description="Threonine/serine transporter TdcC">
    <location>
        <begin position="1"/>
        <end position="443"/>
    </location>
</feature>
<feature type="transmembrane region" description="Helical" evidence="1">
    <location>
        <begin position="22"/>
        <end position="42"/>
    </location>
</feature>
<feature type="transmembrane region" description="Helical" evidence="1">
    <location>
        <begin position="44"/>
        <end position="64"/>
    </location>
</feature>
<feature type="transmembrane region" description="Helical" evidence="1">
    <location>
        <begin position="97"/>
        <end position="117"/>
    </location>
</feature>
<feature type="transmembrane region" description="Helical" evidence="1">
    <location>
        <begin position="135"/>
        <end position="155"/>
    </location>
</feature>
<feature type="transmembrane region" description="Helical" evidence="1">
    <location>
        <begin position="163"/>
        <end position="183"/>
    </location>
</feature>
<feature type="transmembrane region" description="Helical" evidence="1">
    <location>
        <begin position="207"/>
        <end position="227"/>
    </location>
</feature>
<feature type="transmembrane region" description="Helical" evidence="1">
    <location>
        <begin position="259"/>
        <end position="279"/>
    </location>
</feature>
<feature type="transmembrane region" description="Helical" evidence="1">
    <location>
        <begin position="319"/>
        <end position="339"/>
    </location>
</feature>
<feature type="transmembrane region" description="Helical" evidence="1">
    <location>
        <begin position="366"/>
        <end position="386"/>
    </location>
</feature>
<feature type="transmembrane region" description="Helical" evidence="1">
    <location>
        <begin position="389"/>
        <end position="409"/>
    </location>
</feature>
<feature type="transmembrane region" description="Helical" evidence="1">
    <location>
        <begin position="422"/>
        <end position="442"/>
    </location>
</feature>
<dbReference type="EMBL" id="CU928158">
    <property type="protein sequence ID" value="CAQ90542.1"/>
    <property type="molecule type" value="Genomic_DNA"/>
</dbReference>
<dbReference type="RefSeq" id="WP_000099375.1">
    <property type="nucleotide sequence ID" value="NC_011740.1"/>
</dbReference>
<dbReference type="GeneID" id="75060332"/>
<dbReference type="KEGG" id="efe:EFER_3049"/>
<dbReference type="HOGENOM" id="CLU_052043_1_1_6"/>
<dbReference type="OrthoDB" id="1627372at2"/>
<dbReference type="Proteomes" id="UP000000745">
    <property type="component" value="Chromosome"/>
</dbReference>
<dbReference type="GO" id="GO:0005886">
    <property type="term" value="C:plasma membrane"/>
    <property type="evidence" value="ECO:0007669"/>
    <property type="project" value="UniProtKB-SubCell"/>
</dbReference>
<dbReference type="GO" id="GO:0015194">
    <property type="term" value="F:L-serine transmembrane transporter activity"/>
    <property type="evidence" value="ECO:0007669"/>
    <property type="project" value="InterPro"/>
</dbReference>
<dbReference type="GO" id="GO:0015293">
    <property type="term" value="F:symporter activity"/>
    <property type="evidence" value="ECO:0007669"/>
    <property type="project" value="UniProtKB-UniRule"/>
</dbReference>
<dbReference type="GO" id="GO:0015565">
    <property type="term" value="F:threonine efflux transmembrane transporter activity"/>
    <property type="evidence" value="ECO:0007669"/>
    <property type="project" value="InterPro"/>
</dbReference>
<dbReference type="Gene3D" id="1.20.1740.10">
    <property type="entry name" value="Amino acid/polyamine transporter I"/>
    <property type="match status" value="1"/>
</dbReference>
<dbReference type="HAMAP" id="MF_01583">
    <property type="entry name" value="Thr_Ser_transp_TdcC"/>
    <property type="match status" value="1"/>
</dbReference>
<dbReference type="InterPro" id="IPR018227">
    <property type="entry name" value="Amino_acid_transport_2"/>
</dbReference>
<dbReference type="InterPro" id="IPR004694">
    <property type="entry name" value="Hydroxy_aa_transpt"/>
</dbReference>
<dbReference type="InterPro" id="IPR023726">
    <property type="entry name" value="Thr/Ser_transpt_TdcC"/>
</dbReference>
<dbReference type="NCBIfam" id="NF010152">
    <property type="entry name" value="PRK13629.1"/>
    <property type="match status" value="1"/>
</dbReference>
<dbReference type="NCBIfam" id="TIGR00814">
    <property type="entry name" value="stp"/>
    <property type="match status" value="1"/>
</dbReference>
<dbReference type="PANTHER" id="PTHR35334">
    <property type="entry name" value="SERINE TRANSPORTER"/>
    <property type="match status" value="1"/>
</dbReference>
<dbReference type="PANTHER" id="PTHR35334:SF1">
    <property type="entry name" value="THREONINE_SERINE TRANSPORTER TDCC"/>
    <property type="match status" value="1"/>
</dbReference>
<dbReference type="Pfam" id="PF03222">
    <property type="entry name" value="Trp_Tyr_perm"/>
    <property type="match status" value="1"/>
</dbReference>